<name>TNSE_ECOLX</name>
<organism>
    <name type="scientific">Escherichia coli</name>
    <dbReference type="NCBI Taxonomy" id="562"/>
    <lineage>
        <taxon>Bacteria</taxon>
        <taxon>Pseudomonadati</taxon>
        <taxon>Pseudomonadota</taxon>
        <taxon>Gammaproteobacteria</taxon>
        <taxon>Enterobacterales</taxon>
        <taxon>Enterobacteriaceae</taxon>
        <taxon>Escherichia</taxon>
    </lineage>
</organism>
<accession>P05845</accession>
<accession>Q7AJH8</accession>
<geneLocation type="plasmid">
    <name>R721</name>
</geneLocation>
<dbReference type="EMBL" id="X17693">
    <property type="protein sequence ID" value="CAA35687.1"/>
    <property type="molecule type" value="Genomic_DNA"/>
</dbReference>
<dbReference type="EMBL" id="X04534">
    <property type="protein sequence ID" value="CAB56509.1"/>
    <property type="molecule type" value="Genomic_DNA"/>
</dbReference>
<dbReference type="EMBL" id="AP002527">
    <property type="protein sequence ID" value="BAB12609.1"/>
    <property type="molecule type" value="Genomic_DNA"/>
</dbReference>
<dbReference type="PIR" id="A25543">
    <property type="entry name" value="QQECD7"/>
</dbReference>
<dbReference type="RefSeq" id="NP_065316.1">
    <property type="nucleotide sequence ID" value="NC_002525.1"/>
</dbReference>
<dbReference type="RefSeq" id="WP_000251879.1">
    <property type="nucleotide sequence ID" value="NZ_WWEV01000116.1"/>
</dbReference>
<dbReference type="PDB" id="5D16">
    <property type="method" value="X-ray"/>
    <property type="resolution" value="1.76 A"/>
    <property type="chains" value="A/B=342-538"/>
</dbReference>
<dbReference type="PDB" id="5D17">
    <property type="method" value="X-ray"/>
    <property type="resolution" value="2.85 A"/>
    <property type="chains" value="A/B/C/D/E/F/G/H/I/K/L/M=342-538"/>
</dbReference>
<dbReference type="PDBsum" id="5D16"/>
<dbReference type="PDBsum" id="5D17"/>
<dbReference type="SMR" id="P05845"/>
<dbReference type="IntAct" id="P05845">
    <property type="interactions" value="1"/>
</dbReference>
<dbReference type="EvolutionaryTrace" id="P05845"/>
<dbReference type="GO" id="GO:0003677">
    <property type="term" value="F:DNA binding"/>
    <property type="evidence" value="ECO:0007669"/>
    <property type="project" value="UniProtKB-KW"/>
</dbReference>
<dbReference type="GO" id="GO:0006310">
    <property type="term" value="P:DNA recombination"/>
    <property type="evidence" value="ECO:0007669"/>
    <property type="project" value="UniProtKB-KW"/>
</dbReference>
<dbReference type="GO" id="GO:0032196">
    <property type="term" value="P:transposition"/>
    <property type="evidence" value="ECO:0007669"/>
    <property type="project" value="UniProtKB-KW"/>
</dbReference>
<dbReference type="InterPro" id="IPR041419">
    <property type="entry name" value="TnsE_C"/>
</dbReference>
<dbReference type="InterPro" id="IPR016421">
    <property type="entry name" value="Transposition_TnsE"/>
</dbReference>
<dbReference type="Pfam" id="PF18623">
    <property type="entry name" value="TnsE_C"/>
    <property type="match status" value="1"/>
</dbReference>
<dbReference type="PIRSF" id="PIRSF004567">
    <property type="entry name" value="Transposition_TnsE"/>
    <property type="match status" value="1"/>
</dbReference>
<feature type="chain" id="PRO_0000072615" description="Transposon Tn7 transposition protein TnsE">
    <location>
        <begin position="1"/>
        <end position="538"/>
    </location>
</feature>
<feature type="DNA-binding region" description="H-T-H motif" evidence="1">
    <location>
        <begin position="311"/>
        <end position="330"/>
    </location>
</feature>
<feature type="region of interest" description="Disordered" evidence="2">
    <location>
        <begin position="330"/>
        <end position="360"/>
    </location>
</feature>
<feature type="helix" evidence="3">
    <location>
        <begin position="383"/>
        <end position="389"/>
    </location>
</feature>
<feature type="helix" evidence="3">
    <location>
        <begin position="390"/>
        <end position="402"/>
    </location>
</feature>
<feature type="strand" evidence="3">
    <location>
        <begin position="406"/>
        <end position="414"/>
    </location>
</feature>
<feature type="strand" evidence="3">
    <location>
        <begin position="429"/>
        <end position="431"/>
    </location>
</feature>
<feature type="strand" evidence="3">
    <location>
        <begin position="433"/>
        <end position="441"/>
    </location>
</feature>
<feature type="strand" evidence="3">
    <location>
        <begin position="444"/>
        <end position="451"/>
    </location>
</feature>
<feature type="strand" evidence="3">
    <location>
        <begin position="462"/>
        <end position="467"/>
    </location>
</feature>
<feature type="turn" evidence="4">
    <location>
        <begin position="470"/>
        <end position="472"/>
    </location>
</feature>
<feature type="helix" evidence="3">
    <location>
        <begin position="473"/>
        <end position="486"/>
    </location>
</feature>
<feature type="helix" evidence="3">
    <location>
        <begin position="493"/>
        <end position="500"/>
    </location>
</feature>
<feature type="helix" evidence="3">
    <location>
        <begin position="502"/>
        <end position="504"/>
    </location>
</feature>
<feature type="strand" evidence="3">
    <location>
        <begin position="505"/>
        <end position="508"/>
    </location>
</feature>
<feature type="turn" evidence="3">
    <location>
        <begin position="512"/>
        <end position="515"/>
    </location>
</feature>
<feature type="helix" evidence="3">
    <location>
        <begin position="521"/>
        <end position="532"/>
    </location>
</feature>
<gene>
    <name type="primary">tnsE</name>
</gene>
<evidence type="ECO:0000250" key="1"/>
<evidence type="ECO:0000256" key="2">
    <source>
        <dbReference type="SAM" id="MobiDB-lite"/>
    </source>
</evidence>
<evidence type="ECO:0007829" key="3">
    <source>
        <dbReference type="PDB" id="5D16"/>
    </source>
</evidence>
<evidence type="ECO:0007829" key="4">
    <source>
        <dbReference type="PDB" id="5D17"/>
    </source>
</evidence>
<comment type="function">
    <text>TnsABC + TnsD promote high-frequency insertion of Tn7 into a specific target site known as att-Tn7 whereas TnsABC + TnsE promote low-frequency insertion into many different sites.</text>
</comment>
<comment type="interaction">
    <interactant intactId="EBI-2434514">
        <id>P05845</id>
    </interactant>
    <interactant intactId="EBI-542385">
        <id>P0A988</id>
        <label>dnaN</label>
    </interactant>
    <organismsDiffer>true</organismsDiffer>
    <experiments>4</experiments>
</comment>
<sequence length="538" mass="61212">MVRLATFNDNVQVVHIGHLFRNSGHKEWRIFVWFNPMQERKWTRFTHLPLLSRAKVVNSTTKQINKADRVIEFEASDLQRAKIIDFPNLSSFASVRNKDGAQSSFIYEAETPYSKTRYHIPQLELARSLFLINSYFCRSCLSSTALQQEFDVQYEVERDHLEIRILPSSSFPKGALEQSAVVQLLVWLFSDQDVMDSYESIFRHYQQNREIKNGVESWCFSFDPPPMQGWKLHVKGRSSNEDKDYLVEEIVGLEINAMLPSTTAISHASFQEKEAGDGSTQHIAVSTESVVDDEHLQLDDEETANIDTDTRVIEAEPTWISFSRPSRIEKSRRARKSSQTILEKEEATTSENSNLVSTDEPHLGGVLAAADVGGKQDATNYNSIFANRFAAFDELLSILKTKFACRVLFEETLVLPKVGRSRLHLCKDGSPRVIKAVGVQRNGSEFVLLEVDASDGVKMLSTKVLSGVDSETWRNDFEKIRRGVVKSSLNWPNSLFDQLYGQDGHRGVNHPKGLGELQVSREDMEGWAERVVREQFTH</sequence>
<protein>
    <recommendedName>
        <fullName>Transposon Tn7 transposition protein TnsE</fullName>
    </recommendedName>
    <alternativeName>
        <fullName>Protein D</fullName>
    </alternativeName>
</protein>
<proteinExistence type="evidence at protein level"/>
<keyword id="KW-0002">3D-structure</keyword>
<keyword id="KW-0233">DNA recombination</keyword>
<keyword id="KW-0238">DNA-binding</keyword>
<keyword id="KW-0614">Plasmid</keyword>
<keyword id="KW-0814">Transposable element</keyword>
<keyword id="KW-0815">Transposition</keyword>
<reference key="1">
    <citation type="journal article" date="1990" name="Nucleic Acids Res.">
        <title>DNA sequence analysis of five genes; tnsA, B, C, D and E, required for Tn7 transposition.</title>
        <authorList>
            <person name="Flores C."/>
            <person name="Qadri M.I."/>
            <person name="Lichtenstein C."/>
        </authorList>
    </citation>
    <scope>NUCLEOTIDE SEQUENCE [GENOMIC DNA]</scope>
</reference>
<reference key="2">
    <citation type="journal article" date="1986" name="Nucleic Acids Res.">
        <title>Tn7 transposition: a multigene process. Identification of a regulatory gene product.</title>
        <authorList>
            <person name="Smith G.M."/>
            <person name="Jones P."/>
        </authorList>
    </citation>
    <scope>NUCLEOTIDE SEQUENCE [GENOMIC DNA]</scope>
</reference>
<reference key="3">
    <citation type="submission" date="2000-06" db="EMBL/GenBank/DDBJ databases">
        <title>Organization and diversification of plasmid genomes: complete nucleotide sequence of the R721 genome.</title>
        <authorList>
            <person name="Sampei G."/>
            <person name="Motomura K."/>
            <person name="Masuda S."/>
            <person name="Yamaguchi T."/>
            <person name="Ando K."/>
            <person name="Oishi T."/>
            <person name="Furuya N."/>
            <person name="Komano T."/>
            <person name="Mizobuchi K."/>
        </authorList>
    </citation>
    <scope>NUCLEOTIDE SEQUENCE [GENOMIC DNA]</scope>
    <source>
        <plasmid>R721</plasmid>
    </source>
</reference>